<proteinExistence type="evidence at transcript level"/>
<name>RL31_PONAB</name>
<accession>Q5RBR9</accession>
<comment type="function">
    <text evidence="1">Component of the large ribosomal subunit. The ribosome is a large ribonucleoprotein complex responsible for the synthesis of proteins in the cell.</text>
</comment>
<comment type="subunit">
    <text evidence="1">Component of the large ribosomal subunit.</text>
</comment>
<comment type="subcellular location">
    <subcellularLocation>
        <location evidence="1">Cytoplasm</location>
    </subcellularLocation>
</comment>
<comment type="similarity">
    <text evidence="3">Belongs to the eukaryotic ribosomal protein eL31 family.</text>
</comment>
<protein>
    <recommendedName>
        <fullName evidence="3">Large ribosomal subunit protein eL31</fullName>
    </recommendedName>
    <alternativeName>
        <fullName>60S ribosomal protein L31</fullName>
    </alternativeName>
</protein>
<evidence type="ECO:0000250" key="1">
    <source>
        <dbReference type="UniProtKB" id="P62899"/>
    </source>
</evidence>
<evidence type="ECO:0000250" key="2">
    <source>
        <dbReference type="UniProtKB" id="P62900"/>
    </source>
</evidence>
<evidence type="ECO:0000305" key="3"/>
<sequence>MAPAKKGGEKKKGRSAINEVVTREYTINIHKRIHGVGFKKRAPRALKEIRKFAMKEMGTPDVRIDTRLNKAVWAKGIRNVPYRIRVRLSRKRNEDEDSPNKLYTLVTYVPVTTFKNLQTVNVDGN</sequence>
<organism>
    <name type="scientific">Pongo abelii</name>
    <name type="common">Sumatran orangutan</name>
    <name type="synonym">Pongo pygmaeus abelii</name>
    <dbReference type="NCBI Taxonomy" id="9601"/>
    <lineage>
        <taxon>Eukaryota</taxon>
        <taxon>Metazoa</taxon>
        <taxon>Chordata</taxon>
        <taxon>Craniata</taxon>
        <taxon>Vertebrata</taxon>
        <taxon>Euteleostomi</taxon>
        <taxon>Mammalia</taxon>
        <taxon>Eutheria</taxon>
        <taxon>Euarchontoglires</taxon>
        <taxon>Primates</taxon>
        <taxon>Haplorrhini</taxon>
        <taxon>Catarrhini</taxon>
        <taxon>Hominidae</taxon>
        <taxon>Pongo</taxon>
    </lineage>
</organism>
<dbReference type="EMBL" id="CR858565">
    <property type="protein sequence ID" value="CAH90791.1"/>
    <property type="molecule type" value="mRNA"/>
</dbReference>
<dbReference type="RefSeq" id="NP_001125448.1">
    <property type="nucleotide sequence ID" value="NM_001131976.1"/>
</dbReference>
<dbReference type="SMR" id="Q5RBR9"/>
<dbReference type="FunCoup" id="Q5RBR9">
    <property type="interactions" value="1482"/>
</dbReference>
<dbReference type="STRING" id="9601.ENSPPYP00000018548"/>
<dbReference type="GeneID" id="100172356"/>
<dbReference type="KEGG" id="pon:100172356"/>
<dbReference type="CTD" id="6160"/>
<dbReference type="eggNOG" id="KOG0893">
    <property type="taxonomic scope" value="Eukaryota"/>
</dbReference>
<dbReference type="InParanoid" id="Q5RBR9"/>
<dbReference type="OrthoDB" id="9532992at2759"/>
<dbReference type="Proteomes" id="UP000001595">
    <property type="component" value="Unplaced"/>
</dbReference>
<dbReference type="GO" id="GO:0022625">
    <property type="term" value="C:cytosolic large ribosomal subunit"/>
    <property type="evidence" value="ECO:0007669"/>
    <property type="project" value="TreeGrafter"/>
</dbReference>
<dbReference type="GO" id="GO:0003735">
    <property type="term" value="F:structural constituent of ribosome"/>
    <property type="evidence" value="ECO:0007669"/>
    <property type="project" value="InterPro"/>
</dbReference>
<dbReference type="GO" id="GO:0002181">
    <property type="term" value="P:cytoplasmic translation"/>
    <property type="evidence" value="ECO:0007669"/>
    <property type="project" value="TreeGrafter"/>
</dbReference>
<dbReference type="CDD" id="cd00463">
    <property type="entry name" value="Ribosomal_L31e"/>
    <property type="match status" value="1"/>
</dbReference>
<dbReference type="FunFam" id="3.10.440.10:FF:000001">
    <property type="entry name" value="60S ribosomal protein L31"/>
    <property type="match status" value="1"/>
</dbReference>
<dbReference type="Gene3D" id="3.10.440.10">
    <property type="match status" value="1"/>
</dbReference>
<dbReference type="InterPro" id="IPR000054">
    <property type="entry name" value="Ribosomal_eL31"/>
</dbReference>
<dbReference type="InterPro" id="IPR020052">
    <property type="entry name" value="Ribosomal_eL31_CS"/>
</dbReference>
<dbReference type="InterPro" id="IPR023621">
    <property type="entry name" value="Ribosomal_eL31_dom_sf"/>
</dbReference>
<dbReference type="PANTHER" id="PTHR10956">
    <property type="entry name" value="60S RIBOSOMAL PROTEIN L31"/>
    <property type="match status" value="1"/>
</dbReference>
<dbReference type="PANTHER" id="PTHR10956:SF0">
    <property type="entry name" value="60S RIBOSOMAL PROTEIN L31"/>
    <property type="match status" value="1"/>
</dbReference>
<dbReference type="Pfam" id="PF01198">
    <property type="entry name" value="Ribosomal_L31e"/>
    <property type="match status" value="1"/>
</dbReference>
<dbReference type="SMART" id="SM01380">
    <property type="entry name" value="Ribosomal_L31e"/>
    <property type="match status" value="1"/>
</dbReference>
<dbReference type="SUPFAM" id="SSF54575">
    <property type="entry name" value="Ribosomal protein L31e"/>
    <property type="match status" value="1"/>
</dbReference>
<dbReference type="PROSITE" id="PS01144">
    <property type="entry name" value="RIBOSOMAL_L31E"/>
    <property type="match status" value="1"/>
</dbReference>
<feature type="chain" id="PRO_0000265734" description="Large ribosomal subunit protein eL31">
    <location>
        <begin position="1"/>
        <end position="125"/>
    </location>
</feature>
<feature type="modified residue" description="N-acetylmethionine" evidence="1">
    <location>
        <position position="1"/>
    </location>
</feature>
<feature type="modified residue" description="Phosphoserine" evidence="2">
    <location>
        <position position="15"/>
    </location>
</feature>
<feature type="modified residue" description="N6-succinyllysine" evidence="2">
    <location>
        <position position="55"/>
    </location>
</feature>
<feature type="modified residue" description="N6-succinyllysine" evidence="2">
    <location>
        <position position="70"/>
    </location>
</feature>
<feature type="modified residue" description="N6-acetyllysine; alternate" evidence="1">
    <location>
        <position position="75"/>
    </location>
</feature>
<feature type="modified residue" description="N6-succinyllysine; alternate" evidence="2">
    <location>
        <position position="75"/>
    </location>
</feature>
<feature type="modified residue" description="Phosphoserine" evidence="1">
    <location>
        <position position="98"/>
    </location>
</feature>
<gene>
    <name type="primary">RPL31</name>
</gene>
<keyword id="KW-0007">Acetylation</keyword>
<keyword id="KW-0963">Cytoplasm</keyword>
<keyword id="KW-0597">Phosphoprotein</keyword>
<keyword id="KW-1185">Reference proteome</keyword>
<keyword id="KW-0687">Ribonucleoprotein</keyword>
<keyword id="KW-0689">Ribosomal protein</keyword>
<reference key="1">
    <citation type="submission" date="2004-11" db="EMBL/GenBank/DDBJ databases">
        <authorList>
            <consortium name="The German cDNA consortium"/>
        </authorList>
    </citation>
    <scope>NUCLEOTIDE SEQUENCE [LARGE SCALE MRNA]</scope>
    <source>
        <tissue>Brain cortex</tissue>
    </source>
</reference>